<feature type="chain" id="PRO_0000237493" description="DNA-directed RNA polymerase subunit omega">
    <location>
        <begin position="1"/>
        <end position="87"/>
    </location>
</feature>
<proteinExistence type="inferred from homology"/>
<keyword id="KW-0240">DNA-directed RNA polymerase</keyword>
<keyword id="KW-0548">Nucleotidyltransferase</keyword>
<keyword id="KW-0804">Transcription</keyword>
<keyword id="KW-0808">Transferase</keyword>
<protein>
    <recommendedName>
        <fullName evidence="1">DNA-directed RNA polymerase subunit omega</fullName>
        <shortName evidence="1">RNAP omega subunit</shortName>
        <ecNumber evidence="1">2.7.7.6</ecNumber>
    </recommendedName>
    <alternativeName>
        <fullName evidence="1">RNA polymerase omega subunit</fullName>
    </alternativeName>
    <alternativeName>
        <fullName evidence="1">Transcriptase subunit omega</fullName>
    </alternativeName>
</protein>
<organism>
    <name type="scientific">Pseudomonas syringae pv. syringae (strain B728a)</name>
    <dbReference type="NCBI Taxonomy" id="205918"/>
    <lineage>
        <taxon>Bacteria</taxon>
        <taxon>Pseudomonadati</taxon>
        <taxon>Pseudomonadota</taxon>
        <taxon>Gammaproteobacteria</taxon>
        <taxon>Pseudomonadales</taxon>
        <taxon>Pseudomonadaceae</taxon>
        <taxon>Pseudomonas</taxon>
        <taxon>Pseudomonas syringae</taxon>
    </lineage>
</organism>
<gene>
    <name evidence="1" type="primary">rpoZ</name>
    <name type="ordered locus">Psyr_0210</name>
</gene>
<sequence length="87" mass="9712">MARVTVEDCLEHVDNRFELVMLSTKRARQLATGGKEPKLAWENDKPTVMALREIAAGVMDYSVIAEAEIVEDEPLFAAFEDESNEAV</sequence>
<accession>Q4ZZY9</accession>
<reference key="1">
    <citation type="journal article" date="2005" name="Proc. Natl. Acad. Sci. U.S.A.">
        <title>Comparison of the complete genome sequences of Pseudomonas syringae pv. syringae B728a and pv. tomato DC3000.</title>
        <authorList>
            <person name="Feil H."/>
            <person name="Feil W.S."/>
            <person name="Chain P."/>
            <person name="Larimer F."/>
            <person name="Dibartolo G."/>
            <person name="Copeland A."/>
            <person name="Lykidis A."/>
            <person name="Trong S."/>
            <person name="Nolan M."/>
            <person name="Goltsman E."/>
            <person name="Thiel J."/>
            <person name="Malfatti S."/>
            <person name="Loper J.E."/>
            <person name="Lapidus A."/>
            <person name="Detter J.C."/>
            <person name="Land M."/>
            <person name="Richardson P.M."/>
            <person name="Kyrpides N.C."/>
            <person name="Ivanova N."/>
            <person name="Lindow S.E."/>
        </authorList>
    </citation>
    <scope>NUCLEOTIDE SEQUENCE [LARGE SCALE GENOMIC DNA]</scope>
    <source>
        <strain>B728a</strain>
    </source>
</reference>
<comment type="function">
    <text evidence="1">Promotes RNA polymerase assembly. Latches the N- and C-terminal regions of the beta' subunit thereby facilitating its interaction with the beta and alpha subunits.</text>
</comment>
<comment type="catalytic activity">
    <reaction evidence="1">
        <text>RNA(n) + a ribonucleoside 5'-triphosphate = RNA(n+1) + diphosphate</text>
        <dbReference type="Rhea" id="RHEA:21248"/>
        <dbReference type="Rhea" id="RHEA-COMP:14527"/>
        <dbReference type="Rhea" id="RHEA-COMP:17342"/>
        <dbReference type="ChEBI" id="CHEBI:33019"/>
        <dbReference type="ChEBI" id="CHEBI:61557"/>
        <dbReference type="ChEBI" id="CHEBI:140395"/>
        <dbReference type="EC" id="2.7.7.6"/>
    </reaction>
</comment>
<comment type="subunit">
    <text evidence="1">The RNAP catalytic core consists of 2 alpha, 1 beta, 1 beta' and 1 omega subunit. When a sigma factor is associated with the core the holoenzyme is formed, which can initiate transcription.</text>
</comment>
<comment type="similarity">
    <text evidence="1">Belongs to the RNA polymerase subunit omega family.</text>
</comment>
<name>RPOZ_PSEU2</name>
<dbReference type="EC" id="2.7.7.6" evidence="1"/>
<dbReference type="EMBL" id="CP000075">
    <property type="protein sequence ID" value="AAY35283.1"/>
    <property type="molecule type" value="Genomic_DNA"/>
</dbReference>
<dbReference type="RefSeq" id="WP_003320174.1">
    <property type="nucleotide sequence ID" value="NC_007005.1"/>
</dbReference>
<dbReference type="RefSeq" id="YP_233321.1">
    <property type="nucleotide sequence ID" value="NC_007005.1"/>
</dbReference>
<dbReference type="SMR" id="Q4ZZY9"/>
<dbReference type="STRING" id="205918.Psyr_0210"/>
<dbReference type="GeneID" id="77276135"/>
<dbReference type="KEGG" id="psb:Psyr_0210"/>
<dbReference type="PATRIC" id="fig|205918.7.peg.207"/>
<dbReference type="eggNOG" id="COG1758">
    <property type="taxonomic scope" value="Bacteria"/>
</dbReference>
<dbReference type="HOGENOM" id="CLU_125406_5_2_6"/>
<dbReference type="OrthoDB" id="9796300at2"/>
<dbReference type="Proteomes" id="UP000000426">
    <property type="component" value="Chromosome"/>
</dbReference>
<dbReference type="GO" id="GO:0000428">
    <property type="term" value="C:DNA-directed RNA polymerase complex"/>
    <property type="evidence" value="ECO:0007669"/>
    <property type="project" value="UniProtKB-KW"/>
</dbReference>
<dbReference type="GO" id="GO:0003677">
    <property type="term" value="F:DNA binding"/>
    <property type="evidence" value="ECO:0007669"/>
    <property type="project" value="UniProtKB-UniRule"/>
</dbReference>
<dbReference type="GO" id="GO:0003899">
    <property type="term" value="F:DNA-directed RNA polymerase activity"/>
    <property type="evidence" value="ECO:0007669"/>
    <property type="project" value="UniProtKB-UniRule"/>
</dbReference>
<dbReference type="GO" id="GO:0006351">
    <property type="term" value="P:DNA-templated transcription"/>
    <property type="evidence" value="ECO:0007669"/>
    <property type="project" value="UniProtKB-UniRule"/>
</dbReference>
<dbReference type="Gene3D" id="3.90.940.10">
    <property type="match status" value="1"/>
</dbReference>
<dbReference type="HAMAP" id="MF_00366">
    <property type="entry name" value="RNApol_bact_RpoZ"/>
    <property type="match status" value="1"/>
</dbReference>
<dbReference type="InterPro" id="IPR003716">
    <property type="entry name" value="DNA-dir_RNA_pol_omega"/>
</dbReference>
<dbReference type="InterPro" id="IPR006110">
    <property type="entry name" value="Pol_omega/Rpo6/RPB6"/>
</dbReference>
<dbReference type="InterPro" id="IPR036161">
    <property type="entry name" value="RPB6/omega-like_sf"/>
</dbReference>
<dbReference type="NCBIfam" id="TIGR00690">
    <property type="entry name" value="rpoZ"/>
    <property type="match status" value="1"/>
</dbReference>
<dbReference type="PANTHER" id="PTHR34476">
    <property type="entry name" value="DNA-DIRECTED RNA POLYMERASE SUBUNIT OMEGA"/>
    <property type="match status" value="1"/>
</dbReference>
<dbReference type="PANTHER" id="PTHR34476:SF1">
    <property type="entry name" value="DNA-DIRECTED RNA POLYMERASE SUBUNIT OMEGA"/>
    <property type="match status" value="1"/>
</dbReference>
<dbReference type="Pfam" id="PF01192">
    <property type="entry name" value="RNA_pol_Rpb6"/>
    <property type="match status" value="1"/>
</dbReference>
<dbReference type="SMART" id="SM01409">
    <property type="entry name" value="RNA_pol_Rpb6"/>
    <property type="match status" value="1"/>
</dbReference>
<dbReference type="SUPFAM" id="SSF63562">
    <property type="entry name" value="RPB6/omega subunit-like"/>
    <property type="match status" value="1"/>
</dbReference>
<evidence type="ECO:0000255" key="1">
    <source>
        <dbReference type="HAMAP-Rule" id="MF_00366"/>
    </source>
</evidence>